<dbReference type="EMBL" id="AP009324">
    <property type="protein sequence ID" value="BAF76884.1"/>
    <property type="molecule type" value="Genomic_DNA"/>
</dbReference>
<dbReference type="RefSeq" id="WP_001290433.1">
    <property type="nucleotide sequence ID" value="NC_009782.1"/>
</dbReference>
<dbReference type="SMR" id="A7WWM4"/>
<dbReference type="KEGG" id="saw:SAHV_0001"/>
<dbReference type="HOGENOM" id="CLU_026910_3_1_9"/>
<dbReference type="GO" id="GO:0005737">
    <property type="term" value="C:cytoplasm"/>
    <property type="evidence" value="ECO:0007669"/>
    <property type="project" value="UniProtKB-SubCell"/>
</dbReference>
<dbReference type="GO" id="GO:0005886">
    <property type="term" value="C:plasma membrane"/>
    <property type="evidence" value="ECO:0007669"/>
    <property type="project" value="TreeGrafter"/>
</dbReference>
<dbReference type="GO" id="GO:0005524">
    <property type="term" value="F:ATP binding"/>
    <property type="evidence" value="ECO:0007669"/>
    <property type="project" value="UniProtKB-UniRule"/>
</dbReference>
<dbReference type="GO" id="GO:0016887">
    <property type="term" value="F:ATP hydrolysis activity"/>
    <property type="evidence" value="ECO:0007669"/>
    <property type="project" value="InterPro"/>
</dbReference>
<dbReference type="GO" id="GO:0003688">
    <property type="term" value="F:DNA replication origin binding"/>
    <property type="evidence" value="ECO:0007669"/>
    <property type="project" value="UniProtKB-UniRule"/>
</dbReference>
<dbReference type="GO" id="GO:0008289">
    <property type="term" value="F:lipid binding"/>
    <property type="evidence" value="ECO:0007669"/>
    <property type="project" value="UniProtKB-KW"/>
</dbReference>
<dbReference type="GO" id="GO:0006270">
    <property type="term" value="P:DNA replication initiation"/>
    <property type="evidence" value="ECO:0007669"/>
    <property type="project" value="UniProtKB-UniRule"/>
</dbReference>
<dbReference type="GO" id="GO:0006275">
    <property type="term" value="P:regulation of DNA replication"/>
    <property type="evidence" value="ECO:0007669"/>
    <property type="project" value="UniProtKB-UniRule"/>
</dbReference>
<dbReference type="CDD" id="cd00009">
    <property type="entry name" value="AAA"/>
    <property type="match status" value="1"/>
</dbReference>
<dbReference type="CDD" id="cd06571">
    <property type="entry name" value="Bac_DnaA_C"/>
    <property type="match status" value="1"/>
</dbReference>
<dbReference type="FunFam" id="1.10.1750.10:FF:000003">
    <property type="entry name" value="Chromosomal replication initiator protein DnaA"/>
    <property type="match status" value="1"/>
</dbReference>
<dbReference type="FunFam" id="1.10.8.60:FF:000003">
    <property type="entry name" value="Chromosomal replication initiator protein DnaA"/>
    <property type="match status" value="1"/>
</dbReference>
<dbReference type="FunFam" id="3.40.50.300:FF:000150">
    <property type="entry name" value="Chromosomal replication initiator protein DnaA"/>
    <property type="match status" value="1"/>
</dbReference>
<dbReference type="Gene3D" id="1.10.1750.10">
    <property type="match status" value="1"/>
</dbReference>
<dbReference type="Gene3D" id="1.10.8.60">
    <property type="match status" value="1"/>
</dbReference>
<dbReference type="Gene3D" id="3.30.300.180">
    <property type="match status" value="1"/>
</dbReference>
<dbReference type="Gene3D" id="3.40.50.300">
    <property type="entry name" value="P-loop containing nucleotide triphosphate hydrolases"/>
    <property type="match status" value="1"/>
</dbReference>
<dbReference type="HAMAP" id="MF_00377">
    <property type="entry name" value="DnaA_bact"/>
    <property type="match status" value="1"/>
</dbReference>
<dbReference type="InterPro" id="IPR003593">
    <property type="entry name" value="AAA+_ATPase"/>
</dbReference>
<dbReference type="InterPro" id="IPR001957">
    <property type="entry name" value="Chromosome_initiator_DnaA"/>
</dbReference>
<dbReference type="InterPro" id="IPR020591">
    <property type="entry name" value="Chromosome_initiator_DnaA-like"/>
</dbReference>
<dbReference type="InterPro" id="IPR018312">
    <property type="entry name" value="Chromosome_initiator_DnaA_CS"/>
</dbReference>
<dbReference type="InterPro" id="IPR013159">
    <property type="entry name" value="DnaA_C"/>
</dbReference>
<dbReference type="InterPro" id="IPR013317">
    <property type="entry name" value="DnaA_dom"/>
</dbReference>
<dbReference type="InterPro" id="IPR024633">
    <property type="entry name" value="DnaA_N_dom"/>
</dbReference>
<dbReference type="InterPro" id="IPR038454">
    <property type="entry name" value="DnaA_N_sf"/>
</dbReference>
<dbReference type="InterPro" id="IPR027417">
    <property type="entry name" value="P-loop_NTPase"/>
</dbReference>
<dbReference type="InterPro" id="IPR010921">
    <property type="entry name" value="Trp_repressor/repl_initiator"/>
</dbReference>
<dbReference type="NCBIfam" id="TIGR00362">
    <property type="entry name" value="DnaA"/>
    <property type="match status" value="1"/>
</dbReference>
<dbReference type="PANTHER" id="PTHR30050">
    <property type="entry name" value="CHROMOSOMAL REPLICATION INITIATOR PROTEIN DNAA"/>
    <property type="match status" value="1"/>
</dbReference>
<dbReference type="PANTHER" id="PTHR30050:SF2">
    <property type="entry name" value="CHROMOSOMAL REPLICATION INITIATOR PROTEIN DNAA"/>
    <property type="match status" value="1"/>
</dbReference>
<dbReference type="Pfam" id="PF00308">
    <property type="entry name" value="Bac_DnaA"/>
    <property type="match status" value="1"/>
</dbReference>
<dbReference type="Pfam" id="PF08299">
    <property type="entry name" value="Bac_DnaA_C"/>
    <property type="match status" value="1"/>
</dbReference>
<dbReference type="Pfam" id="PF11638">
    <property type="entry name" value="DnaA_N"/>
    <property type="match status" value="1"/>
</dbReference>
<dbReference type="PRINTS" id="PR00051">
    <property type="entry name" value="DNAA"/>
</dbReference>
<dbReference type="SMART" id="SM00382">
    <property type="entry name" value="AAA"/>
    <property type="match status" value="1"/>
</dbReference>
<dbReference type="SMART" id="SM00760">
    <property type="entry name" value="Bac_DnaA_C"/>
    <property type="match status" value="1"/>
</dbReference>
<dbReference type="SUPFAM" id="SSF52540">
    <property type="entry name" value="P-loop containing nucleoside triphosphate hydrolases"/>
    <property type="match status" value="1"/>
</dbReference>
<dbReference type="SUPFAM" id="SSF48295">
    <property type="entry name" value="TrpR-like"/>
    <property type="match status" value="1"/>
</dbReference>
<dbReference type="PROSITE" id="PS01008">
    <property type="entry name" value="DNAA"/>
    <property type="match status" value="1"/>
</dbReference>
<feature type="chain" id="PRO_1000048731" description="Chromosomal replication initiator protein DnaA">
    <location>
        <begin position="1"/>
        <end position="453"/>
    </location>
</feature>
<feature type="region of interest" description="Domain I, interacts with DnaA modulators" evidence="1">
    <location>
        <begin position="1"/>
        <end position="71"/>
    </location>
</feature>
<feature type="region of interest" description="Domain II" evidence="1">
    <location>
        <begin position="71"/>
        <end position="114"/>
    </location>
</feature>
<feature type="region of interest" description="Domain III, AAA+ region" evidence="1">
    <location>
        <begin position="115"/>
        <end position="331"/>
    </location>
</feature>
<feature type="region of interest" description="Domain IV, binds dsDNA" evidence="1">
    <location>
        <begin position="332"/>
        <end position="453"/>
    </location>
</feature>
<feature type="binding site" evidence="1">
    <location>
        <position position="159"/>
    </location>
    <ligand>
        <name>ATP</name>
        <dbReference type="ChEBI" id="CHEBI:30616"/>
    </ligand>
</feature>
<feature type="binding site" evidence="1">
    <location>
        <position position="161"/>
    </location>
    <ligand>
        <name>ATP</name>
        <dbReference type="ChEBI" id="CHEBI:30616"/>
    </ligand>
</feature>
<feature type="binding site" evidence="1">
    <location>
        <position position="162"/>
    </location>
    <ligand>
        <name>ATP</name>
        <dbReference type="ChEBI" id="CHEBI:30616"/>
    </ligand>
</feature>
<feature type="binding site" evidence="1">
    <location>
        <position position="163"/>
    </location>
    <ligand>
        <name>ATP</name>
        <dbReference type="ChEBI" id="CHEBI:30616"/>
    </ligand>
</feature>
<protein>
    <recommendedName>
        <fullName evidence="1">Chromosomal replication initiator protein DnaA</fullName>
    </recommendedName>
</protein>
<accession>A7WWM4</accession>
<organism>
    <name type="scientific">Staphylococcus aureus (strain Mu3 / ATCC 700698)</name>
    <dbReference type="NCBI Taxonomy" id="418127"/>
    <lineage>
        <taxon>Bacteria</taxon>
        <taxon>Bacillati</taxon>
        <taxon>Bacillota</taxon>
        <taxon>Bacilli</taxon>
        <taxon>Bacillales</taxon>
        <taxon>Staphylococcaceae</taxon>
        <taxon>Staphylococcus</taxon>
    </lineage>
</organism>
<gene>
    <name evidence="1" type="primary">dnaA</name>
    <name type="ordered locus">SAHV_0001</name>
</gene>
<name>DNAA_STAA1</name>
<proteinExistence type="inferred from homology"/>
<reference key="1">
    <citation type="journal article" date="2008" name="Antimicrob. Agents Chemother.">
        <title>Mutated response regulator graR is responsible for phenotypic conversion of Staphylococcus aureus from heterogeneous vancomycin-intermediate resistance to vancomycin-intermediate resistance.</title>
        <authorList>
            <person name="Neoh H.-M."/>
            <person name="Cui L."/>
            <person name="Yuzawa H."/>
            <person name="Takeuchi F."/>
            <person name="Matsuo M."/>
            <person name="Hiramatsu K."/>
        </authorList>
    </citation>
    <scope>NUCLEOTIDE SEQUENCE [LARGE SCALE GENOMIC DNA]</scope>
    <source>
        <strain>Mu3 / ATCC 700698</strain>
    </source>
</reference>
<sequence>MSEKEIWEKVLEIAQEKLSAVSYSTFLKDTELYTIKDGEAIVLSSIPFNANWLNQQYAEIIQAILFDVVGYEVKPHFITTEELANYSNNETATPKETTKPSTETTEDNHVLGREQFNAHNTFDTFVIGPGNRFPHAASLAVAEAPAKAYNPLFIYGGVGLGKTHLMHAIGHHVLDNNPDAKVIYTSSEKFTNEFIKSIRDNEGEAFRERYRNIDVLLIDDIQFIQNKVQTQEEFFYTFNELHQNNKQIVISSDRPPKEIAQLEDRLRSRFEWGLIVDITPPDYETRMAILQKKIEEEKLDIPPEALNYIANQIQSNIRELEGALTRLLAYSQLLGKPITTELTAEALKDIIQAPKSKKITIQDIQKIVGQYYNVRIEDFSAKKRTKSIAYPRQIAMYLSRELTDFSLPKIGEEFGGRDHTTVIHAHEKISKDLKEDPIFKQEVENLEKEIRNV</sequence>
<comment type="function">
    <text evidence="1">Plays an essential role in the initiation and regulation of chromosomal replication. ATP-DnaA binds to the origin of replication (oriC) to initiate formation of the DNA replication initiation complex once per cell cycle. Binds the DnaA box (a 9 base pair repeat at the origin) and separates the double-stranded (ds)DNA. Forms a right-handed helical filament on oriC DNA; dsDNA binds to the exterior of the filament while single-stranded (ss)DNA is stabiized in the filament's interior. The ATP-DnaA-oriC complex binds and stabilizes one strand of the AT-rich DNA unwinding element (DUE), permitting loading of DNA polymerase. After initiation quickly degrades to an ADP-DnaA complex that is not apt for DNA replication. Binds acidic phospholipids.</text>
</comment>
<comment type="subunit">
    <text evidence="1">Oligomerizes as a right-handed, spiral filament on DNA at oriC.</text>
</comment>
<comment type="subcellular location">
    <subcellularLocation>
        <location evidence="1">Cytoplasm</location>
    </subcellularLocation>
</comment>
<comment type="domain">
    <text evidence="1">Domain I is involved in oligomerization and binding regulators, domain II is flexibile and of varying length in different bacteria, domain III forms the AAA+ region, while domain IV binds dsDNA.</text>
</comment>
<comment type="similarity">
    <text evidence="1">Belongs to the DnaA family.</text>
</comment>
<keyword id="KW-0067">ATP-binding</keyword>
<keyword id="KW-0963">Cytoplasm</keyword>
<keyword id="KW-0235">DNA replication</keyword>
<keyword id="KW-0238">DNA-binding</keyword>
<keyword id="KW-0446">Lipid-binding</keyword>
<keyword id="KW-0547">Nucleotide-binding</keyword>
<evidence type="ECO:0000255" key="1">
    <source>
        <dbReference type="HAMAP-Rule" id="MF_00377"/>
    </source>
</evidence>